<keyword id="KW-0413">Isomerase</keyword>
<keyword id="KW-1185">Reference proteome</keyword>
<keyword id="KW-0694">RNA-binding</keyword>
<feature type="chain" id="PRO_0000162730" description="Uncharacterized RNA pseudouridine synthase YlyB">
    <location>
        <begin position="1"/>
        <end position="303"/>
    </location>
</feature>
<feature type="domain" description="S4 RNA-binding" evidence="2">
    <location>
        <begin position="15"/>
        <end position="74"/>
    </location>
</feature>
<feature type="active site" evidence="1">
    <location>
        <position position="138"/>
    </location>
</feature>
<feature type="sequence conflict" description="In Ref. 5; M59757." evidence="3" ref="5">
    <original>R</original>
    <variation>G</variation>
    <location>
        <position position="217"/>
    </location>
</feature>
<feature type="sequence conflict" description="In Ref. 5; M59757." evidence="3" ref="5">
    <original>A</original>
    <variation>P</variation>
    <location>
        <position position="265"/>
    </location>
</feature>
<feature type="sequence conflict" description="In Ref. 5; M59757." evidence="3" ref="5">
    <original>P</original>
    <variation>S</variation>
    <location>
        <position position="287"/>
    </location>
</feature>
<sequence>MNQIDITASEEQKSERIDKFLASTENDWSRTQVQQWVKDGQVVVNGSAVKANYKIQPGDQVTVTVPEPEALDVLAEPMDLDIYYEDQDVLVVNKPRGMVVHPAPGHLTGTLVNGLMAHCTDLSGINGVMRPGIVHRIDKDTSGLLMVAKNDMAHESLVNQLVNKTVTRKYTAVVHGLISHDDGTIDAPIGRDKKDRQSMTVTRDGKNAVTHFHVLERFQDFTLVECQLETGRTHQIRVHMKYIGFPLAGDPKYGPRKTIDFNGQALHAGVLGFDHPRTGEYVEFEAPLPEDMAELIENLRKNG</sequence>
<organism>
    <name type="scientific">Bacillus subtilis (strain 168)</name>
    <dbReference type="NCBI Taxonomy" id="224308"/>
    <lineage>
        <taxon>Bacteria</taxon>
        <taxon>Bacillati</taxon>
        <taxon>Bacillota</taxon>
        <taxon>Bacilli</taxon>
        <taxon>Bacillales</taxon>
        <taxon>Bacillaceae</taxon>
        <taxon>Bacillus</taxon>
    </lineage>
</organism>
<name>YLYB_BACSU</name>
<protein>
    <recommendedName>
        <fullName>Uncharacterized RNA pseudouridine synthase YlyB</fullName>
        <ecNumber>5.4.99.-</ecNumber>
    </recommendedName>
    <alternativeName>
        <fullName>RNA pseudouridylate synthase</fullName>
    </alternativeName>
    <alternativeName>
        <fullName>RNA-uridine isomerase</fullName>
    </alternativeName>
</protein>
<comment type="catalytic activity">
    <reaction>
        <text>a uridine in RNA = a pseudouridine in RNA</text>
        <dbReference type="Rhea" id="RHEA:48348"/>
        <dbReference type="Rhea" id="RHEA-COMP:12068"/>
        <dbReference type="Rhea" id="RHEA-COMP:12069"/>
        <dbReference type="ChEBI" id="CHEBI:65314"/>
        <dbReference type="ChEBI" id="CHEBI:65315"/>
    </reaction>
</comment>
<comment type="similarity">
    <text evidence="3">Belongs to the pseudouridine synthase RluA family.</text>
</comment>
<comment type="sequence caution" evidence="3">
    <conflict type="frameshift">
        <sequence resource="EMBL" id="M59757"/>
    </conflict>
</comment>
<dbReference type="EC" id="5.4.99.-"/>
<dbReference type="EMBL" id="U48870">
    <property type="protein sequence ID" value="AAB57767.1"/>
    <property type="molecule type" value="Genomic_DNA"/>
</dbReference>
<dbReference type="EMBL" id="AL009126">
    <property type="protein sequence ID" value="CAB13420.3"/>
    <property type="molecule type" value="Genomic_DNA"/>
</dbReference>
<dbReference type="EMBL" id="M59757">
    <property type="status" value="NOT_ANNOTATED_CDS"/>
    <property type="molecule type" value="Genomic_DNA"/>
</dbReference>
<dbReference type="PIR" id="B69883">
    <property type="entry name" value="B69883"/>
</dbReference>
<dbReference type="RefSeq" id="WP_003245307.1">
    <property type="nucleotide sequence ID" value="NZ_OZ025638.1"/>
</dbReference>
<dbReference type="SMR" id="Q45480"/>
<dbReference type="FunCoup" id="Q45480">
    <property type="interactions" value="799"/>
</dbReference>
<dbReference type="STRING" id="224308.BSU15460"/>
<dbReference type="jPOST" id="Q45480"/>
<dbReference type="PaxDb" id="224308-BSU15460"/>
<dbReference type="EnsemblBacteria" id="CAB13420">
    <property type="protein sequence ID" value="CAB13420"/>
    <property type="gene ID" value="BSU_15460"/>
</dbReference>
<dbReference type="GeneID" id="939987"/>
<dbReference type="KEGG" id="bsu:BSU15460"/>
<dbReference type="PATRIC" id="fig|224308.179.peg.1685"/>
<dbReference type="eggNOG" id="COG0564">
    <property type="taxonomic scope" value="Bacteria"/>
</dbReference>
<dbReference type="InParanoid" id="Q45480"/>
<dbReference type="OrthoDB" id="9807829at2"/>
<dbReference type="BioCyc" id="BSUB:BSU15460-MONOMER"/>
<dbReference type="Proteomes" id="UP000001570">
    <property type="component" value="Chromosome"/>
</dbReference>
<dbReference type="GO" id="GO:0009982">
    <property type="term" value="F:pseudouridine synthase activity"/>
    <property type="evidence" value="ECO:0000318"/>
    <property type="project" value="GO_Central"/>
</dbReference>
<dbReference type="GO" id="GO:0003723">
    <property type="term" value="F:RNA binding"/>
    <property type="evidence" value="ECO:0007669"/>
    <property type="project" value="UniProtKB-KW"/>
</dbReference>
<dbReference type="GO" id="GO:0120159">
    <property type="term" value="F:rRNA pseudouridine synthase activity"/>
    <property type="evidence" value="ECO:0007669"/>
    <property type="project" value="UniProtKB-ARBA"/>
</dbReference>
<dbReference type="GO" id="GO:0000455">
    <property type="term" value="P:enzyme-directed rRNA pseudouridine synthesis"/>
    <property type="evidence" value="ECO:0000318"/>
    <property type="project" value="GO_Central"/>
</dbReference>
<dbReference type="CDD" id="cd02869">
    <property type="entry name" value="PseudoU_synth_RluA_like"/>
    <property type="match status" value="1"/>
</dbReference>
<dbReference type="CDD" id="cd00165">
    <property type="entry name" value="S4"/>
    <property type="match status" value="1"/>
</dbReference>
<dbReference type="FunFam" id="3.10.290.10:FF:000016">
    <property type="entry name" value="Pseudouridine synthase"/>
    <property type="match status" value="1"/>
</dbReference>
<dbReference type="FunFam" id="3.30.2350.10:FF:000006">
    <property type="entry name" value="Pseudouridine synthase"/>
    <property type="match status" value="1"/>
</dbReference>
<dbReference type="Gene3D" id="3.30.2350.10">
    <property type="entry name" value="Pseudouridine synthase"/>
    <property type="match status" value="1"/>
</dbReference>
<dbReference type="Gene3D" id="3.10.290.10">
    <property type="entry name" value="RNA-binding S4 domain"/>
    <property type="match status" value="1"/>
</dbReference>
<dbReference type="InterPro" id="IPR020103">
    <property type="entry name" value="PsdUridine_synth_cat_dom_sf"/>
</dbReference>
<dbReference type="InterPro" id="IPR006224">
    <property type="entry name" value="PsdUridine_synth_RluA-like_CS"/>
</dbReference>
<dbReference type="InterPro" id="IPR006225">
    <property type="entry name" value="PsdUridine_synth_RluC/D"/>
</dbReference>
<dbReference type="InterPro" id="IPR006145">
    <property type="entry name" value="PsdUridine_synth_RsuA/RluA"/>
</dbReference>
<dbReference type="InterPro" id="IPR050188">
    <property type="entry name" value="RluA_PseudoU_synthase"/>
</dbReference>
<dbReference type="InterPro" id="IPR002942">
    <property type="entry name" value="S4_RNA-bd"/>
</dbReference>
<dbReference type="InterPro" id="IPR036986">
    <property type="entry name" value="S4_RNA-bd_sf"/>
</dbReference>
<dbReference type="NCBIfam" id="TIGR00005">
    <property type="entry name" value="rluA_subfam"/>
    <property type="match status" value="1"/>
</dbReference>
<dbReference type="PANTHER" id="PTHR21600">
    <property type="entry name" value="MITOCHONDRIAL RNA PSEUDOURIDINE SYNTHASE"/>
    <property type="match status" value="1"/>
</dbReference>
<dbReference type="PANTHER" id="PTHR21600:SF44">
    <property type="entry name" value="RIBOSOMAL LARGE SUBUNIT PSEUDOURIDINE SYNTHASE D"/>
    <property type="match status" value="1"/>
</dbReference>
<dbReference type="Pfam" id="PF00849">
    <property type="entry name" value="PseudoU_synth_2"/>
    <property type="match status" value="1"/>
</dbReference>
<dbReference type="Pfam" id="PF01479">
    <property type="entry name" value="S4"/>
    <property type="match status" value="1"/>
</dbReference>
<dbReference type="SMART" id="SM00363">
    <property type="entry name" value="S4"/>
    <property type="match status" value="1"/>
</dbReference>
<dbReference type="SUPFAM" id="SSF55174">
    <property type="entry name" value="Alpha-L RNA-binding motif"/>
    <property type="match status" value="1"/>
</dbReference>
<dbReference type="SUPFAM" id="SSF55120">
    <property type="entry name" value="Pseudouridine synthase"/>
    <property type="match status" value="1"/>
</dbReference>
<dbReference type="PROSITE" id="PS01129">
    <property type="entry name" value="PSI_RLU"/>
    <property type="match status" value="1"/>
</dbReference>
<dbReference type="PROSITE" id="PS50889">
    <property type="entry name" value="S4"/>
    <property type="match status" value="1"/>
</dbReference>
<accession>Q45480</accession>
<accession>O31732</accession>
<gene>
    <name type="primary">ylyB</name>
    <name type="synonym">ylmL</name>
    <name type="ordered locus">BSU15460</name>
</gene>
<proteinExistence type="inferred from homology"/>
<reference key="1">
    <citation type="submission" date="1996-02" db="EMBL/GenBank/DDBJ databases">
        <authorList>
            <person name="Pragai Z."/>
            <person name="Tjalsma H."/>
            <person name="Bolhuis A."/>
            <person name="van Dijl J.M."/>
            <person name="Venema G."/>
            <person name="Bron S."/>
        </authorList>
    </citation>
    <scope>NUCLEOTIDE SEQUENCE [GENOMIC DNA]</scope>
    <source>
        <strain>168</strain>
    </source>
</reference>
<reference key="2">
    <citation type="journal article" date="1997" name="Nature">
        <title>The complete genome sequence of the Gram-positive bacterium Bacillus subtilis.</title>
        <authorList>
            <person name="Kunst F."/>
            <person name="Ogasawara N."/>
            <person name="Moszer I."/>
            <person name="Albertini A.M."/>
            <person name="Alloni G."/>
            <person name="Azevedo V."/>
            <person name="Bertero M.G."/>
            <person name="Bessieres P."/>
            <person name="Bolotin A."/>
            <person name="Borchert S."/>
            <person name="Borriss R."/>
            <person name="Boursier L."/>
            <person name="Brans A."/>
            <person name="Braun M."/>
            <person name="Brignell S.C."/>
            <person name="Bron S."/>
            <person name="Brouillet S."/>
            <person name="Bruschi C.V."/>
            <person name="Caldwell B."/>
            <person name="Capuano V."/>
            <person name="Carter N.M."/>
            <person name="Choi S.-K."/>
            <person name="Codani J.-J."/>
            <person name="Connerton I.F."/>
            <person name="Cummings N.J."/>
            <person name="Daniel R.A."/>
            <person name="Denizot F."/>
            <person name="Devine K.M."/>
            <person name="Duesterhoeft A."/>
            <person name="Ehrlich S.D."/>
            <person name="Emmerson P.T."/>
            <person name="Entian K.-D."/>
            <person name="Errington J."/>
            <person name="Fabret C."/>
            <person name="Ferrari E."/>
            <person name="Foulger D."/>
            <person name="Fritz C."/>
            <person name="Fujita M."/>
            <person name="Fujita Y."/>
            <person name="Fuma S."/>
            <person name="Galizzi A."/>
            <person name="Galleron N."/>
            <person name="Ghim S.-Y."/>
            <person name="Glaser P."/>
            <person name="Goffeau A."/>
            <person name="Golightly E.J."/>
            <person name="Grandi G."/>
            <person name="Guiseppi G."/>
            <person name="Guy B.J."/>
            <person name="Haga K."/>
            <person name="Haiech J."/>
            <person name="Harwood C.R."/>
            <person name="Henaut A."/>
            <person name="Hilbert H."/>
            <person name="Holsappel S."/>
            <person name="Hosono S."/>
            <person name="Hullo M.-F."/>
            <person name="Itaya M."/>
            <person name="Jones L.-M."/>
            <person name="Joris B."/>
            <person name="Karamata D."/>
            <person name="Kasahara Y."/>
            <person name="Klaerr-Blanchard M."/>
            <person name="Klein C."/>
            <person name="Kobayashi Y."/>
            <person name="Koetter P."/>
            <person name="Koningstein G."/>
            <person name="Krogh S."/>
            <person name="Kumano M."/>
            <person name="Kurita K."/>
            <person name="Lapidus A."/>
            <person name="Lardinois S."/>
            <person name="Lauber J."/>
            <person name="Lazarevic V."/>
            <person name="Lee S.-M."/>
            <person name="Levine A."/>
            <person name="Liu H."/>
            <person name="Masuda S."/>
            <person name="Mauel C."/>
            <person name="Medigue C."/>
            <person name="Medina N."/>
            <person name="Mellado R.P."/>
            <person name="Mizuno M."/>
            <person name="Moestl D."/>
            <person name="Nakai S."/>
            <person name="Noback M."/>
            <person name="Noone D."/>
            <person name="O'Reilly M."/>
            <person name="Ogawa K."/>
            <person name="Ogiwara A."/>
            <person name="Oudega B."/>
            <person name="Park S.-H."/>
            <person name="Parro V."/>
            <person name="Pohl T.M."/>
            <person name="Portetelle D."/>
            <person name="Porwollik S."/>
            <person name="Prescott A.M."/>
            <person name="Presecan E."/>
            <person name="Pujic P."/>
            <person name="Purnelle B."/>
            <person name="Rapoport G."/>
            <person name="Rey M."/>
            <person name="Reynolds S."/>
            <person name="Rieger M."/>
            <person name="Rivolta C."/>
            <person name="Rocha E."/>
            <person name="Roche B."/>
            <person name="Rose M."/>
            <person name="Sadaie Y."/>
            <person name="Sato T."/>
            <person name="Scanlan E."/>
            <person name="Schleich S."/>
            <person name="Schroeter R."/>
            <person name="Scoffone F."/>
            <person name="Sekiguchi J."/>
            <person name="Sekowska A."/>
            <person name="Seror S.J."/>
            <person name="Serror P."/>
            <person name="Shin B.-S."/>
            <person name="Soldo B."/>
            <person name="Sorokin A."/>
            <person name="Tacconi E."/>
            <person name="Takagi T."/>
            <person name="Takahashi H."/>
            <person name="Takemaru K."/>
            <person name="Takeuchi M."/>
            <person name="Tamakoshi A."/>
            <person name="Tanaka T."/>
            <person name="Terpstra P."/>
            <person name="Tognoni A."/>
            <person name="Tosato V."/>
            <person name="Uchiyama S."/>
            <person name="Vandenbol M."/>
            <person name="Vannier F."/>
            <person name="Vassarotti A."/>
            <person name="Viari A."/>
            <person name="Wambutt R."/>
            <person name="Wedler E."/>
            <person name="Wedler H."/>
            <person name="Weitzenegger T."/>
            <person name="Winters P."/>
            <person name="Wipat A."/>
            <person name="Yamamoto H."/>
            <person name="Yamane K."/>
            <person name="Yasumoto K."/>
            <person name="Yata K."/>
            <person name="Yoshida K."/>
            <person name="Yoshikawa H.-F."/>
            <person name="Zumstein E."/>
            <person name="Yoshikawa H."/>
            <person name="Danchin A."/>
        </authorList>
    </citation>
    <scope>NUCLEOTIDE SEQUENCE [LARGE SCALE GENOMIC DNA]</scope>
    <source>
        <strain>168</strain>
    </source>
</reference>
<reference key="3">
    <citation type="journal article" date="1999" name="Genome Res.">
        <title>Detecting and analyzing DNA sequencing errors: toward a higher quality of the Bacillus subtilis genome sequence.</title>
        <authorList>
            <person name="Medigue C."/>
            <person name="Rose M."/>
            <person name="Viari A."/>
            <person name="Danchin A."/>
        </authorList>
    </citation>
    <scope>SEQUENCE REVISION</scope>
</reference>
<reference key="4">
    <citation type="journal article" date="2009" name="Microbiology">
        <title>From a consortium sequence to a unified sequence: the Bacillus subtilis 168 reference genome a decade later.</title>
        <authorList>
            <person name="Barbe V."/>
            <person name="Cruveiller S."/>
            <person name="Kunst F."/>
            <person name="Lenoble P."/>
            <person name="Meurice G."/>
            <person name="Sekowska A."/>
            <person name="Vallenet D."/>
            <person name="Wang T."/>
            <person name="Moszer I."/>
            <person name="Medigue C."/>
            <person name="Danchin A."/>
        </authorList>
    </citation>
    <scope>SEQUENCE REVISION TO 217 AND 265</scope>
</reference>
<reference key="5">
    <citation type="journal article" date="1991" name="J. Biol. Chem.">
        <title>Functional organization and nucleotide sequence of the Bacillus subtilis pyrimidine biosynthetic operon.</title>
        <authorList>
            <person name="Quinn C.L."/>
            <person name="Stephenson B.T."/>
            <person name="Switzer R.L."/>
        </authorList>
    </citation>
    <scope>NUCLEOTIDE SEQUENCE [GENOMIC DNA] OF 137-303</scope>
</reference>
<evidence type="ECO:0000250" key="1"/>
<evidence type="ECO:0000255" key="2">
    <source>
        <dbReference type="PROSITE-ProRule" id="PRU00182"/>
    </source>
</evidence>
<evidence type="ECO:0000305" key="3"/>